<feature type="chain" id="PRO_0000149954" description="Arginine decarboxylase">
    <location>
        <begin position="1"/>
        <end position="692"/>
    </location>
</feature>
<feature type="binding site" evidence="1">
    <location>
        <begin position="337"/>
        <end position="347"/>
    </location>
    <ligand>
        <name>substrate</name>
    </ligand>
</feature>
<feature type="modified residue" description="N6-(pyridoxal phosphate)lysine" evidence="1">
    <location>
        <position position="153"/>
    </location>
</feature>
<dbReference type="EC" id="4.1.1.19"/>
<dbReference type="EMBL" id="U35367">
    <property type="protein sequence ID" value="AAD09204.1"/>
    <property type="molecule type" value="mRNA"/>
</dbReference>
<dbReference type="PIR" id="T06593">
    <property type="entry name" value="T06593"/>
</dbReference>
<dbReference type="RefSeq" id="NP_001238359.1">
    <property type="nucleotide sequence ID" value="NM_001251430.1"/>
</dbReference>
<dbReference type="SMR" id="Q39827"/>
<dbReference type="FunCoup" id="Q39827">
    <property type="interactions" value="35"/>
</dbReference>
<dbReference type="STRING" id="3847.Q39827"/>
<dbReference type="PaxDb" id="3847-GLYMA06G00990.2"/>
<dbReference type="GeneID" id="548071"/>
<dbReference type="KEGG" id="gmx:548071"/>
<dbReference type="eggNOG" id="ENOG502QTXD">
    <property type="taxonomic scope" value="Eukaryota"/>
</dbReference>
<dbReference type="InParanoid" id="Q39827"/>
<dbReference type="OrthoDB" id="3717802at2759"/>
<dbReference type="BRENDA" id="4.1.1.19">
    <property type="organism ID" value="2483"/>
</dbReference>
<dbReference type="SABIO-RK" id="Q39827"/>
<dbReference type="UniPathway" id="UPA00186">
    <property type="reaction ID" value="UER00284"/>
</dbReference>
<dbReference type="Proteomes" id="UP000008827">
    <property type="component" value="Unplaced"/>
</dbReference>
<dbReference type="GO" id="GO:0008792">
    <property type="term" value="F:arginine decarboxylase activity"/>
    <property type="evidence" value="ECO:0000318"/>
    <property type="project" value="GO_Central"/>
</dbReference>
<dbReference type="GO" id="GO:0006527">
    <property type="term" value="P:arginine catabolic process"/>
    <property type="evidence" value="ECO:0007669"/>
    <property type="project" value="InterPro"/>
</dbReference>
<dbReference type="GO" id="GO:0009446">
    <property type="term" value="P:putrescine biosynthetic process"/>
    <property type="evidence" value="ECO:0007669"/>
    <property type="project" value="UniProtKB-KW"/>
</dbReference>
<dbReference type="GO" id="GO:0008295">
    <property type="term" value="P:spermidine biosynthetic process"/>
    <property type="evidence" value="ECO:0007669"/>
    <property type="project" value="UniProtKB-KW"/>
</dbReference>
<dbReference type="CDD" id="cd06830">
    <property type="entry name" value="PLPDE_III_ADC"/>
    <property type="match status" value="1"/>
</dbReference>
<dbReference type="FunFam" id="3.20.20.10:FF:000001">
    <property type="entry name" value="Biosynthetic arginine decarboxylase"/>
    <property type="match status" value="1"/>
</dbReference>
<dbReference type="Gene3D" id="1.20.58.930">
    <property type="match status" value="1"/>
</dbReference>
<dbReference type="Gene3D" id="3.20.20.10">
    <property type="entry name" value="Alanine racemase"/>
    <property type="match status" value="1"/>
</dbReference>
<dbReference type="Gene3D" id="2.40.37.10">
    <property type="entry name" value="Lyase, Ornithine Decarboxylase, Chain A, domain 1"/>
    <property type="match status" value="1"/>
</dbReference>
<dbReference type="InterPro" id="IPR009006">
    <property type="entry name" value="Ala_racemase/Decarboxylase_C"/>
</dbReference>
<dbReference type="InterPro" id="IPR002985">
    <property type="entry name" value="Arg_decrbxlase"/>
</dbReference>
<dbReference type="InterPro" id="IPR022657">
    <property type="entry name" value="De-COase2_CS"/>
</dbReference>
<dbReference type="InterPro" id="IPR022644">
    <property type="entry name" value="De-COase2_N"/>
</dbReference>
<dbReference type="InterPro" id="IPR022653">
    <property type="entry name" value="De-COase2_pyr-phos_BS"/>
</dbReference>
<dbReference type="InterPro" id="IPR000183">
    <property type="entry name" value="Orn/DAP/Arg_de-COase"/>
</dbReference>
<dbReference type="InterPro" id="IPR029066">
    <property type="entry name" value="PLP-binding_barrel"/>
</dbReference>
<dbReference type="NCBIfam" id="NF003763">
    <property type="entry name" value="PRK05354.1"/>
    <property type="match status" value="1"/>
</dbReference>
<dbReference type="NCBIfam" id="TIGR01273">
    <property type="entry name" value="speA"/>
    <property type="match status" value="1"/>
</dbReference>
<dbReference type="PANTHER" id="PTHR43295">
    <property type="entry name" value="ARGININE DECARBOXYLASE"/>
    <property type="match status" value="1"/>
</dbReference>
<dbReference type="PANTHER" id="PTHR43295:SF1">
    <property type="entry name" value="ARGININE DECARBOXYLASE 1, CHLOROPLASTIC-RELATED"/>
    <property type="match status" value="1"/>
</dbReference>
<dbReference type="Pfam" id="PF02784">
    <property type="entry name" value="Orn_Arg_deC_N"/>
    <property type="match status" value="1"/>
</dbReference>
<dbReference type="PIRSF" id="PIRSF001336">
    <property type="entry name" value="Arg_decrbxlase"/>
    <property type="match status" value="1"/>
</dbReference>
<dbReference type="PRINTS" id="PR01180">
    <property type="entry name" value="ARGDCRBXLASE"/>
</dbReference>
<dbReference type="PRINTS" id="PR01179">
    <property type="entry name" value="ODADCRBXLASE"/>
</dbReference>
<dbReference type="SUPFAM" id="SSF50621">
    <property type="entry name" value="Alanine racemase C-terminal domain-like"/>
    <property type="match status" value="1"/>
</dbReference>
<dbReference type="SUPFAM" id="SSF51419">
    <property type="entry name" value="PLP-binding barrel"/>
    <property type="match status" value="1"/>
</dbReference>
<dbReference type="PROSITE" id="PS00878">
    <property type="entry name" value="ODR_DC_2_1"/>
    <property type="match status" value="1"/>
</dbReference>
<dbReference type="PROSITE" id="PS00879">
    <property type="entry name" value="ODR_DC_2_2"/>
    <property type="match status" value="1"/>
</dbReference>
<reference key="1">
    <citation type="online journal article" date="1995" name="Plant Gene Register">
        <title>A cDNA encoding an arginine decarboxylase from soybean hypocotyls.</title>
        <authorList>
            <person name="Nam K.H."/>
            <person name="Lee S.H."/>
            <person name="Lee J.H."/>
        </authorList>
        <locator>PGR95-142</locator>
    </citation>
    <scope>NUCLEOTIDE SEQUENCE [MRNA]</scope>
</reference>
<organism>
    <name type="scientific">Glycine max</name>
    <name type="common">Soybean</name>
    <name type="synonym">Glycine hispida</name>
    <dbReference type="NCBI Taxonomy" id="3847"/>
    <lineage>
        <taxon>Eukaryota</taxon>
        <taxon>Viridiplantae</taxon>
        <taxon>Streptophyta</taxon>
        <taxon>Embryophyta</taxon>
        <taxon>Tracheophyta</taxon>
        <taxon>Spermatophyta</taxon>
        <taxon>Magnoliopsida</taxon>
        <taxon>eudicotyledons</taxon>
        <taxon>Gunneridae</taxon>
        <taxon>Pentapetalae</taxon>
        <taxon>rosids</taxon>
        <taxon>fabids</taxon>
        <taxon>Fabales</taxon>
        <taxon>Fabaceae</taxon>
        <taxon>Papilionoideae</taxon>
        <taxon>50 kb inversion clade</taxon>
        <taxon>NPAAA clade</taxon>
        <taxon>indigoferoid/millettioid clade</taxon>
        <taxon>Phaseoleae</taxon>
        <taxon>Glycine</taxon>
        <taxon>Glycine subgen. Soja</taxon>
    </lineage>
</organism>
<name>SPE1_SOYBN</name>
<proteinExistence type="evidence at transcript level"/>
<keyword id="KW-0210">Decarboxylase</keyword>
<keyword id="KW-0456">Lyase</keyword>
<keyword id="KW-0460">Magnesium</keyword>
<keyword id="KW-0661">Putrescine biosynthesis</keyword>
<keyword id="KW-0663">Pyridoxal phosphate</keyword>
<keyword id="KW-1185">Reference proteome</keyword>
<keyword id="KW-0745">Spermidine biosynthesis</keyword>
<comment type="catalytic activity">
    <reaction>
        <text>L-arginine + H(+) = agmatine + CO2</text>
        <dbReference type="Rhea" id="RHEA:17641"/>
        <dbReference type="ChEBI" id="CHEBI:15378"/>
        <dbReference type="ChEBI" id="CHEBI:16526"/>
        <dbReference type="ChEBI" id="CHEBI:32682"/>
        <dbReference type="ChEBI" id="CHEBI:58145"/>
        <dbReference type="EC" id="4.1.1.19"/>
    </reaction>
</comment>
<comment type="cofactor">
    <cofactor>
        <name>pyridoxal 5'-phosphate</name>
        <dbReference type="ChEBI" id="CHEBI:597326"/>
    </cofactor>
</comment>
<comment type="cofactor">
    <cofactor>
        <name>Mg(2+)</name>
        <dbReference type="ChEBI" id="CHEBI:18420"/>
    </cofactor>
</comment>
<comment type="pathway">
    <text>Amine and polyamine biosynthesis; agmatine biosynthesis; agmatine from L-arginine: step 1/1.</text>
</comment>
<comment type="similarity">
    <text evidence="2">Belongs to the Orn/Lys/Arg decarboxylase class-II family. SpeA subfamily.</text>
</comment>
<sequence>MPVLACCVDAAAPPGYAFAGDISFPAPIAFTGVPPATADDTNNSNNHWSPSLSAALYNVDGWGGPYFAVNTAGNISVRPHGSDTVSHQEIDLLKIVKKASDPKSLGGLSLQLPLIARFPDVLKNRLESLQSAFDYAIQSGGYESHYQGVYPVKCNQDRFVVEDIVKFGSPFRFGLEAGSKPELLLAMSCLCKGNPDGLLICNGFKDAEYISLALVANKLALNTVIVVEQEEEVDLIVELSKKLCIKPVIGLRAKLRTKHSGHFGGIFRRRGKFGLTTARVLRVVKNLDLAGMLDCLQLLHFHIGSQIPSTALLADGVGEAAQIYCELVRLGANMRVIDIGGGLGIDYDGSKSCDSDISVEYGLEEYAAAVVHAVQCVCDRSVKHPVICSESGRAIVSHHSVLIFEAVGTSSTNGGGAPPALSAHYLAEELSEDYGYLSELAFRGDYETCLVYTEEMKERCVEQFKQGTVCMEQLAAVEGLCELVRKAVGAAESVRRYHVNLSIFTSVPDAWGIEQVFPIIPIHRLDEKPSVRGILSDLTCDSDGKIDKFINGESSLPLHEMEGGRTYYLGMFLGGAYEEALGGVHNLFGGPSVVRVSQSDGPHSFAVTRAVPGPSCGDVLRVMQHQPELMFETLKHRAQEYVSHDNAAALLAAGLARTFDRMPYLLSLSSFVADDVAAAVPAAQDLGEQWSY</sequence>
<protein>
    <recommendedName>
        <fullName>Arginine decarboxylase</fullName>
        <shortName>ADC</shortName>
        <shortName>ARGDC</shortName>
        <ecNumber>4.1.1.19</ecNumber>
    </recommendedName>
</protein>
<accession>Q39827</accession>
<evidence type="ECO:0000250" key="1"/>
<evidence type="ECO:0000305" key="2"/>